<reference key="1">
    <citation type="journal article" date="2006" name="Proc. Natl. Acad. Sci. U.S.A.">
        <title>Identification of genes subject to positive selection in uropathogenic strains of Escherichia coli: a comparative genomics approach.</title>
        <authorList>
            <person name="Chen S.L."/>
            <person name="Hung C.-S."/>
            <person name="Xu J."/>
            <person name="Reigstad C.S."/>
            <person name="Magrini V."/>
            <person name="Sabo A."/>
            <person name="Blasiar D."/>
            <person name="Bieri T."/>
            <person name="Meyer R.R."/>
            <person name="Ozersky P."/>
            <person name="Armstrong J.R."/>
            <person name="Fulton R.S."/>
            <person name="Latreille J.P."/>
            <person name="Spieth J."/>
            <person name="Hooton T.M."/>
            <person name="Mardis E.R."/>
            <person name="Hultgren S.J."/>
            <person name="Gordon J.I."/>
        </authorList>
    </citation>
    <scope>NUCLEOTIDE SEQUENCE [LARGE SCALE GENOMIC DNA]</scope>
    <source>
        <strain>UTI89 / UPEC</strain>
    </source>
</reference>
<gene>
    <name evidence="1" type="primary">cbpA</name>
    <name type="ordered locus">UTI89_C1064</name>
</gene>
<proteinExistence type="inferred from homology"/>
<accession>Q1RDL6</accession>
<dbReference type="EMBL" id="CP000243">
    <property type="protein sequence ID" value="ABE06548.1"/>
    <property type="molecule type" value="Genomic_DNA"/>
</dbReference>
<dbReference type="RefSeq" id="WP_000420625.1">
    <property type="nucleotide sequence ID" value="NZ_CP064825.1"/>
</dbReference>
<dbReference type="SMR" id="Q1RDL6"/>
<dbReference type="KEGG" id="eci:UTI89_C1064"/>
<dbReference type="HOGENOM" id="CLU_017633_0_0_6"/>
<dbReference type="Proteomes" id="UP000001952">
    <property type="component" value="Chromosome"/>
</dbReference>
<dbReference type="GO" id="GO:0005737">
    <property type="term" value="C:cytoplasm"/>
    <property type="evidence" value="ECO:0007669"/>
    <property type="project" value="UniProtKB-UniRule"/>
</dbReference>
<dbReference type="GO" id="GO:0009295">
    <property type="term" value="C:nucleoid"/>
    <property type="evidence" value="ECO:0007669"/>
    <property type="project" value="UniProtKB-SubCell"/>
</dbReference>
<dbReference type="GO" id="GO:0003681">
    <property type="term" value="F:bent DNA binding"/>
    <property type="evidence" value="ECO:0007669"/>
    <property type="project" value="UniProtKB-UniRule"/>
</dbReference>
<dbReference type="GO" id="GO:0051082">
    <property type="term" value="F:unfolded protein binding"/>
    <property type="evidence" value="ECO:0007669"/>
    <property type="project" value="InterPro"/>
</dbReference>
<dbReference type="GO" id="GO:0051085">
    <property type="term" value="P:chaperone cofactor-dependent protein refolding"/>
    <property type="evidence" value="ECO:0007669"/>
    <property type="project" value="TreeGrafter"/>
</dbReference>
<dbReference type="GO" id="GO:0042026">
    <property type="term" value="P:protein refolding"/>
    <property type="evidence" value="ECO:0007669"/>
    <property type="project" value="TreeGrafter"/>
</dbReference>
<dbReference type="CDD" id="cd06257">
    <property type="entry name" value="DnaJ"/>
    <property type="match status" value="1"/>
</dbReference>
<dbReference type="CDD" id="cd10747">
    <property type="entry name" value="DnaJ_C"/>
    <property type="match status" value="1"/>
</dbReference>
<dbReference type="FunFam" id="1.10.287.110:FF:000013">
    <property type="entry name" value="Curved DNA-binding protein"/>
    <property type="match status" value="1"/>
</dbReference>
<dbReference type="FunFam" id="2.60.260.20:FF:000008">
    <property type="entry name" value="Curved DNA-binding protein"/>
    <property type="match status" value="1"/>
</dbReference>
<dbReference type="FunFam" id="2.60.260.20:FF:000013">
    <property type="entry name" value="DnaJ subfamily B member 11"/>
    <property type="match status" value="1"/>
</dbReference>
<dbReference type="Gene3D" id="1.10.287.110">
    <property type="entry name" value="DnaJ domain"/>
    <property type="match status" value="1"/>
</dbReference>
<dbReference type="Gene3D" id="1.20.5.460">
    <property type="entry name" value="Single helix bin"/>
    <property type="match status" value="1"/>
</dbReference>
<dbReference type="Gene3D" id="2.60.260.20">
    <property type="entry name" value="Urease metallochaperone UreE, N-terminal domain"/>
    <property type="match status" value="2"/>
</dbReference>
<dbReference type="HAMAP" id="MF_01154">
    <property type="entry name" value="CbpA"/>
    <property type="match status" value="1"/>
</dbReference>
<dbReference type="InterPro" id="IPR023859">
    <property type="entry name" value="DNA-bd_curved-DNA"/>
</dbReference>
<dbReference type="InterPro" id="IPR002939">
    <property type="entry name" value="DnaJ_C"/>
</dbReference>
<dbReference type="InterPro" id="IPR001623">
    <property type="entry name" value="DnaJ_domain"/>
</dbReference>
<dbReference type="InterPro" id="IPR018253">
    <property type="entry name" value="DnaJ_domain_CS"/>
</dbReference>
<dbReference type="InterPro" id="IPR008971">
    <property type="entry name" value="HSP40/DnaJ_pept-bd"/>
</dbReference>
<dbReference type="InterPro" id="IPR036869">
    <property type="entry name" value="J_dom_sf"/>
</dbReference>
<dbReference type="NCBIfam" id="NF007618">
    <property type="entry name" value="PRK10266.1"/>
    <property type="match status" value="1"/>
</dbReference>
<dbReference type="PANTHER" id="PTHR43096">
    <property type="entry name" value="DNAJ HOMOLOG 1, MITOCHONDRIAL-RELATED"/>
    <property type="match status" value="1"/>
</dbReference>
<dbReference type="PANTHER" id="PTHR43096:SF52">
    <property type="entry name" value="DNAJ HOMOLOG 1, MITOCHONDRIAL-RELATED"/>
    <property type="match status" value="1"/>
</dbReference>
<dbReference type="Pfam" id="PF00226">
    <property type="entry name" value="DnaJ"/>
    <property type="match status" value="1"/>
</dbReference>
<dbReference type="Pfam" id="PF01556">
    <property type="entry name" value="DnaJ_C"/>
    <property type="match status" value="1"/>
</dbReference>
<dbReference type="PRINTS" id="PR00625">
    <property type="entry name" value="JDOMAIN"/>
</dbReference>
<dbReference type="SMART" id="SM00271">
    <property type="entry name" value="DnaJ"/>
    <property type="match status" value="1"/>
</dbReference>
<dbReference type="SUPFAM" id="SSF46565">
    <property type="entry name" value="Chaperone J-domain"/>
    <property type="match status" value="1"/>
</dbReference>
<dbReference type="SUPFAM" id="SSF49493">
    <property type="entry name" value="HSP40/DnaJ peptide-binding domain"/>
    <property type="match status" value="2"/>
</dbReference>
<dbReference type="PROSITE" id="PS00636">
    <property type="entry name" value="DNAJ_1"/>
    <property type="match status" value="1"/>
</dbReference>
<dbReference type="PROSITE" id="PS50076">
    <property type="entry name" value="DNAJ_2"/>
    <property type="match status" value="1"/>
</dbReference>
<name>CBPA_ECOUT</name>
<protein>
    <recommendedName>
        <fullName evidence="1">Curved DNA-binding protein</fullName>
    </recommendedName>
</protein>
<comment type="function">
    <text evidence="1">DNA-binding protein that preferentially recognizes a curved DNA sequence. It is probably a functional analog of DnaJ; displays overlapping activities with DnaJ, but functions under different conditions, probably acting as a molecular chaperone in an adaptive response to environmental stresses other than heat shock. Lacks autonomous chaperone activity; binds native substrates and targets them for recognition by DnaK. Its activity is inhibited by the binding of CbpM.</text>
</comment>
<comment type="subcellular location">
    <subcellularLocation>
        <location evidence="1">Cytoplasm</location>
        <location evidence="1">Nucleoid</location>
    </subcellularLocation>
</comment>
<sequence length="306" mass="34485">MELKDYYAIMGVKPTDDLKTIKTAYRRLARKYHPDVSKEPDAEARFKEVAEAWEVLSDEQRRAEYDQMWQHRNDPQFNRQFHHGDGQSFNAEDFDDIFSSIFGQHARQSRQRPATRGHDIEIEVAVFLEETLTEHKRTISYNLPVYNAFGMIEQEIPKTLNVKIPAGVGNGQRIRLKGQGTPGENGGPNGDLWLVIHIAPHPLFDIVGQDLEIVVPVSPWEAALGTKVTVPTLKESILLTIPPGSQAGQRLRVKGKGLVSKKQTGDLYAVLKIVMPPKPDENTAALWQQLADAQSSFDPRKDWGKA</sequence>
<keyword id="KW-0143">Chaperone</keyword>
<keyword id="KW-0963">Cytoplasm</keyword>
<keyword id="KW-0238">DNA-binding</keyword>
<organism>
    <name type="scientific">Escherichia coli (strain UTI89 / UPEC)</name>
    <dbReference type="NCBI Taxonomy" id="364106"/>
    <lineage>
        <taxon>Bacteria</taxon>
        <taxon>Pseudomonadati</taxon>
        <taxon>Pseudomonadota</taxon>
        <taxon>Gammaproteobacteria</taxon>
        <taxon>Enterobacterales</taxon>
        <taxon>Enterobacteriaceae</taxon>
        <taxon>Escherichia</taxon>
    </lineage>
</organism>
<feature type="chain" id="PRO_0000286879" description="Curved DNA-binding protein">
    <location>
        <begin position="1"/>
        <end position="306"/>
    </location>
</feature>
<feature type="domain" description="J" evidence="1">
    <location>
        <begin position="5"/>
        <end position="69"/>
    </location>
</feature>
<evidence type="ECO:0000255" key="1">
    <source>
        <dbReference type="HAMAP-Rule" id="MF_01154"/>
    </source>
</evidence>